<reference evidence="13" key="1">
    <citation type="journal article" date="2000" name="Science">
        <title>The genome sequence of Drosophila melanogaster.</title>
        <authorList>
            <person name="Adams M.D."/>
            <person name="Celniker S.E."/>
            <person name="Holt R.A."/>
            <person name="Evans C.A."/>
            <person name="Gocayne J.D."/>
            <person name="Amanatides P.G."/>
            <person name="Scherer S.E."/>
            <person name="Li P.W."/>
            <person name="Hoskins R.A."/>
            <person name="Galle R.F."/>
            <person name="George R.A."/>
            <person name="Lewis S.E."/>
            <person name="Richards S."/>
            <person name="Ashburner M."/>
            <person name="Henderson S.N."/>
            <person name="Sutton G.G."/>
            <person name="Wortman J.R."/>
            <person name="Yandell M.D."/>
            <person name="Zhang Q."/>
            <person name="Chen L.X."/>
            <person name="Brandon R.C."/>
            <person name="Rogers Y.-H.C."/>
            <person name="Blazej R.G."/>
            <person name="Champe M."/>
            <person name="Pfeiffer B.D."/>
            <person name="Wan K.H."/>
            <person name="Doyle C."/>
            <person name="Baxter E.G."/>
            <person name="Helt G."/>
            <person name="Nelson C.R."/>
            <person name="Miklos G.L.G."/>
            <person name="Abril J.F."/>
            <person name="Agbayani A."/>
            <person name="An H.-J."/>
            <person name="Andrews-Pfannkoch C."/>
            <person name="Baldwin D."/>
            <person name="Ballew R.M."/>
            <person name="Basu A."/>
            <person name="Baxendale J."/>
            <person name="Bayraktaroglu L."/>
            <person name="Beasley E.M."/>
            <person name="Beeson K.Y."/>
            <person name="Benos P.V."/>
            <person name="Berman B.P."/>
            <person name="Bhandari D."/>
            <person name="Bolshakov S."/>
            <person name="Borkova D."/>
            <person name="Botchan M.R."/>
            <person name="Bouck J."/>
            <person name="Brokstein P."/>
            <person name="Brottier P."/>
            <person name="Burtis K.C."/>
            <person name="Busam D.A."/>
            <person name="Butler H."/>
            <person name="Cadieu E."/>
            <person name="Center A."/>
            <person name="Chandra I."/>
            <person name="Cherry J.M."/>
            <person name="Cawley S."/>
            <person name="Dahlke C."/>
            <person name="Davenport L.B."/>
            <person name="Davies P."/>
            <person name="de Pablos B."/>
            <person name="Delcher A."/>
            <person name="Deng Z."/>
            <person name="Mays A.D."/>
            <person name="Dew I."/>
            <person name="Dietz S.M."/>
            <person name="Dodson K."/>
            <person name="Doup L.E."/>
            <person name="Downes M."/>
            <person name="Dugan-Rocha S."/>
            <person name="Dunkov B.C."/>
            <person name="Dunn P."/>
            <person name="Durbin K.J."/>
            <person name="Evangelista C.C."/>
            <person name="Ferraz C."/>
            <person name="Ferriera S."/>
            <person name="Fleischmann W."/>
            <person name="Fosler C."/>
            <person name="Gabrielian A.E."/>
            <person name="Garg N.S."/>
            <person name="Gelbart W.M."/>
            <person name="Glasser K."/>
            <person name="Glodek A."/>
            <person name="Gong F."/>
            <person name="Gorrell J.H."/>
            <person name="Gu Z."/>
            <person name="Guan P."/>
            <person name="Harris M."/>
            <person name="Harris N.L."/>
            <person name="Harvey D.A."/>
            <person name="Heiman T.J."/>
            <person name="Hernandez J.R."/>
            <person name="Houck J."/>
            <person name="Hostin D."/>
            <person name="Houston K.A."/>
            <person name="Howland T.J."/>
            <person name="Wei M.-H."/>
            <person name="Ibegwam C."/>
            <person name="Jalali M."/>
            <person name="Kalush F."/>
            <person name="Karpen G.H."/>
            <person name="Ke Z."/>
            <person name="Kennison J.A."/>
            <person name="Ketchum K.A."/>
            <person name="Kimmel B.E."/>
            <person name="Kodira C.D."/>
            <person name="Kraft C.L."/>
            <person name="Kravitz S."/>
            <person name="Kulp D."/>
            <person name="Lai Z."/>
            <person name="Lasko P."/>
            <person name="Lei Y."/>
            <person name="Levitsky A.A."/>
            <person name="Li J.H."/>
            <person name="Li Z."/>
            <person name="Liang Y."/>
            <person name="Lin X."/>
            <person name="Liu X."/>
            <person name="Mattei B."/>
            <person name="McIntosh T.C."/>
            <person name="McLeod M.P."/>
            <person name="McPherson D."/>
            <person name="Merkulov G."/>
            <person name="Milshina N.V."/>
            <person name="Mobarry C."/>
            <person name="Morris J."/>
            <person name="Moshrefi A."/>
            <person name="Mount S.M."/>
            <person name="Moy M."/>
            <person name="Murphy B."/>
            <person name="Murphy L."/>
            <person name="Muzny D.M."/>
            <person name="Nelson D.L."/>
            <person name="Nelson D.R."/>
            <person name="Nelson K.A."/>
            <person name="Nixon K."/>
            <person name="Nusskern D.R."/>
            <person name="Pacleb J.M."/>
            <person name="Palazzolo M."/>
            <person name="Pittman G.S."/>
            <person name="Pan S."/>
            <person name="Pollard J."/>
            <person name="Puri V."/>
            <person name="Reese M.G."/>
            <person name="Reinert K."/>
            <person name="Remington K."/>
            <person name="Saunders R.D.C."/>
            <person name="Scheeler F."/>
            <person name="Shen H."/>
            <person name="Shue B.C."/>
            <person name="Siden-Kiamos I."/>
            <person name="Simpson M."/>
            <person name="Skupski M.P."/>
            <person name="Smith T.J."/>
            <person name="Spier E."/>
            <person name="Spradling A.C."/>
            <person name="Stapleton M."/>
            <person name="Strong R."/>
            <person name="Sun E."/>
            <person name="Svirskas R."/>
            <person name="Tector C."/>
            <person name="Turner R."/>
            <person name="Venter E."/>
            <person name="Wang A.H."/>
            <person name="Wang X."/>
            <person name="Wang Z.-Y."/>
            <person name="Wassarman D.A."/>
            <person name="Weinstock G.M."/>
            <person name="Weissenbach J."/>
            <person name="Williams S.M."/>
            <person name="Woodage T."/>
            <person name="Worley K.C."/>
            <person name="Wu D."/>
            <person name="Yang S."/>
            <person name="Yao Q.A."/>
            <person name="Ye J."/>
            <person name="Yeh R.-F."/>
            <person name="Zaveri J.S."/>
            <person name="Zhan M."/>
            <person name="Zhang G."/>
            <person name="Zhao Q."/>
            <person name="Zheng L."/>
            <person name="Zheng X.H."/>
            <person name="Zhong F.N."/>
            <person name="Zhong W."/>
            <person name="Zhou X."/>
            <person name="Zhu S.C."/>
            <person name="Zhu X."/>
            <person name="Smith H.O."/>
            <person name="Gibbs R.A."/>
            <person name="Myers E.W."/>
            <person name="Rubin G.M."/>
            <person name="Venter J.C."/>
        </authorList>
    </citation>
    <scope>NUCLEOTIDE SEQUENCE [LARGE SCALE GENOMIC DNA]</scope>
    <source>
        <strain evidence="13">Berkeley</strain>
    </source>
</reference>
<reference evidence="13" key="2">
    <citation type="journal article" date="2002" name="Genome Biol.">
        <title>Annotation of the Drosophila melanogaster euchromatic genome: a systematic review.</title>
        <authorList>
            <person name="Misra S."/>
            <person name="Crosby M.A."/>
            <person name="Mungall C.J."/>
            <person name="Matthews B.B."/>
            <person name="Campbell K.S."/>
            <person name="Hradecky P."/>
            <person name="Huang Y."/>
            <person name="Kaminker J.S."/>
            <person name="Millburn G.H."/>
            <person name="Prochnik S.E."/>
            <person name="Smith C.D."/>
            <person name="Tupy J.L."/>
            <person name="Whitfield E.J."/>
            <person name="Bayraktaroglu L."/>
            <person name="Berman B.P."/>
            <person name="Bettencourt B.R."/>
            <person name="Celniker S.E."/>
            <person name="de Grey A.D.N.J."/>
            <person name="Drysdale R.A."/>
            <person name="Harris N.L."/>
            <person name="Richter J."/>
            <person name="Russo S."/>
            <person name="Schroeder A.J."/>
            <person name="Shu S.Q."/>
            <person name="Stapleton M."/>
            <person name="Yamada C."/>
            <person name="Ashburner M."/>
            <person name="Gelbart W.M."/>
            <person name="Rubin G.M."/>
            <person name="Lewis S.E."/>
        </authorList>
    </citation>
    <scope>GENOME REANNOTATION</scope>
    <source>
        <strain evidence="13">Berkeley</strain>
    </source>
</reference>
<reference evidence="11" key="3">
    <citation type="journal article" date="2000" name="Science">
        <title>A Drosophila complementary DNA resource.</title>
        <authorList>
            <person name="Rubin G.M."/>
            <person name="Hong L."/>
            <person name="Brokstein P."/>
            <person name="Evans-Holm M."/>
            <person name="Frise E."/>
            <person name="Stapleton M."/>
            <person name="Harvey D.A."/>
        </authorList>
    </citation>
    <scope>NUCLEOTIDE SEQUENCE [LARGE SCALE MRNA]</scope>
    <source>
        <strain evidence="11">Berkeley</strain>
        <tissue evidence="11">Embryo</tissue>
    </source>
</reference>
<reference evidence="10" key="4">
    <citation type="journal article" date="2008" name="Mol. Biol. Cell">
        <title>In vivo dynamics of Drosophila nuclear envelope components.</title>
        <authorList>
            <person name="Katsani K.R."/>
            <person name="Karess R.E."/>
            <person name="Dostatni N."/>
            <person name="Doye V."/>
        </authorList>
    </citation>
    <scope>SUBCELLULAR LOCATION</scope>
    <scope>DEVELOPMENTAL STAGE</scope>
    <scope>DISRUPTION PHENOTYPE</scope>
</reference>
<reference evidence="10" key="5">
    <citation type="journal article" date="2010" name="Mol. Cell. Biol.">
        <title>Specific nucleoporin requirement for Smad nuclear translocation.</title>
        <authorList>
            <person name="Chen X."/>
            <person name="Xu L."/>
        </authorList>
    </citation>
    <scope>FUNCTION</scope>
</reference>
<reference evidence="10" key="6">
    <citation type="journal article" date="2015" name="J. Clin. Invest.">
        <title>A mutation in the nucleoporin-107 gene causes XX gonadal dysgenesis.</title>
        <authorList>
            <person name="Weinberg-Shukron A."/>
            <person name="Renbaum P."/>
            <person name="Kalifa R."/>
            <person name="Zeligson S."/>
            <person name="Ben-Neriah Z."/>
            <person name="Dreifuss A."/>
            <person name="Abu-Rayyan A."/>
            <person name="Maatuk N."/>
            <person name="Fardian N."/>
            <person name="Rekler D."/>
            <person name="Kanaan M."/>
            <person name="Samson A.O."/>
            <person name="Levy-Lahad E."/>
            <person name="Gerlitz O."/>
            <person name="Zangen D."/>
        </authorList>
    </citation>
    <scope>FUNCTION</scope>
    <scope>SUBCELLULAR LOCATION</scope>
    <scope>DISRUPTION PHENOTYPE</scope>
    <scope>MUTAGENESIS OF ASP-364</scope>
</reference>
<reference key="7">
    <citation type="journal article" date="2015" name="Nat. Cell Biol.">
        <title>Heterochromatic breaks move to the nuclear periphery to continue recombinational repair.</title>
        <authorList>
            <person name="Ryu T."/>
            <person name="Spatola B."/>
            <person name="Delabaere L."/>
            <person name="Bowlin K."/>
            <person name="Hopp H."/>
            <person name="Kunitake R."/>
            <person name="Karpen G.H."/>
            <person name="Chiolo I."/>
        </authorList>
    </citation>
    <scope>FUNCTION</scope>
    <scope>SUBCELLULAR LOCATION</scope>
</reference>
<reference evidence="10" key="8">
    <citation type="journal article" date="2016" name="Biol. Open">
        <title>B-type nuclear lamin and the nuclear pore complex Nup107-160 influences maintenance of the spindle envelope required for cytokinesis in Drosophila male meiosis.</title>
        <authorList>
            <person name="Hayashi D."/>
            <person name="Tanabe K."/>
            <person name="Katsube H."/>
            <person name="Inoue Y.H."/>
        </authorList>
    </citation>
    <scope>FUNCTION</scope>
    <scope>SUBCELLULAR LOCATION</scope>
    <scope>TISSUE SPECIFICITY</scope>
    <scope>DISRUPTION PHENOTYPE</scope>
</reference>
<reference key="9">
    <citation type="journal article" date="2019" name="Cell">
        <title>Nuclear Pores Assemble from Nucleoporin Condensates During Oogenesis.</title>
        <authorList>
            <person name="Hampoelz B."/>
            <person name="Schwarz A."/>
            <person name="Ronchi P."/>
            <person name="Bragulat-Teixidor H."/>
            <person name="Tischer C."/>
            <person name="Gaspar I."/>
            <person name="Ephrussi A."/>
            <person name="Schwab Y."/>
            <person name="Beck M."/>
        </authorList>
    </citation>
    <scope>DEVELOPMENTAL STAGE</scope>
</reference>
<reference key="10">
    <citation type="journal article" date="2019" name="Mol. Cell">
        <title>Core Components of the Nuclear Pore Bind Distinct States of Chromatin and Contribute to Polycomb Repression.</title>
        <authorList>
            <person name="Gozalo A."/>
            <person name="Duke A."/>
            <person name="Lan Y."/>
            <person name="Pascual-Garcia P."/>
            <person name="Talamas J.A."/>
            <person name="Nguyen S.C."/>
            <person name="Shah P.P."/>
            <person name="Jain R."/>
            <person name="Joyce E.F."/>
            <person name="Capelson M."/>
        </authorList>
    </citation>
    <scope>FUNCTION</scope>
    <scope>SUBCELLULAR LOCATION</scope>
</reference>
<accession>Q9V466</accession>
<keyword id="KW-0158">Chromosome</keyword>
<keyword id="KW-0963">Cytoplasm</keyword>
<keyword id="KW-0206">Cytoskeleton</keyword>
<keyword id="KW-0227">DNA damage</keyword>
<keyword id="KW-0234">DNA repair</keyword>
<keyword id="KW-0472">Membrane</keyword>
<keyword id="KW-0509">mRNA transport</keyword>
<keyword id="KW-0906">Nuclear pore complex</keyword>
<keyword id="KW-0539">Nucleus</keyword>
<keyword id="KW-0653">Protein transport</keyword>
<keyword id="KW-1185">Reference proteome</keyword>
<keyword id="KW-0811">Translocation</keyword>
<keyword id="KW-0813">Transport</keyword>
<feature type="chain" id="PRO_0000441254" description="Nuclear pore complex protein Nup107" evidence="10">
    <location>
        <begin position="1"/>
        <end position="845"/>
    </location>
</feature>
<feature type="region of interest" description="Disordered" evidence="2">
    <location>
        <begin position="1"/>
        <end position="26"/>
    </location>
</feature>
<feature type="region of interest" description="Disordered" evidence="2">
    <location>
        <begin position="677"/>
        <end position="702"/>
    </location>
</feature>
<feature type="compositionally biased region" description="Polar residues" evidence="2">
    <location>
        <begin position="7"/>
        <end position="26"/>
    </location>
</feature>
<feature type="compositionally biased region" description="Polar residues" evidence="2">
    <location>
        <begin position="685"/>
        <end position="694"/>
    </location>
</feature>
<feature type="mutagenesis site" description="Reduced female fertility caused by perturbed oogenesis which includes chorion defects and general ovariole disintegration due to apoptosis." evidence="5">
    <original>D</original>
    <variation>N</variation>
    <location>
        <position position="364"/>
    </location>
</feature>
<comment type="function">
    <text evidence="4 5 6 7 9">Plays a role in nuclear pore complex (NPC) assembly and maintenance (PubMed:20547758). Required for nuclear import of Mad (PubMed:20547758). Mediates the association between the nuclear pore complex and a subset of active chromatin regions adjacent to lamin-associated domains (PubMed:31784359). Plays a role in double strand break repair by relocalizing the heterochromatic double strand breaks (DSBs) to the nuclear periphery as part of the homologous recombination (HR) repair process (PubMed:26502056). Regulates cytokinesis during spermatocyte meiosis by maintaining type-B lamin Lam localization to the spindle envelope (PubMed:27402967). Regulates female gonad development and oogenesis (PubMed:26485283).</text>
</comment>
<comment type="subunit">
    <text evidence="1">Part of the nuclear pore complex (NPC).</text>
</comment>
<comment type="subcellular location">
    <subcellularLocation>
        <location evidence="6 9">Nucleus</location>
        <location evidence="6 9">Nuclear pore complex</location>
    </subcellularLocation>
    <subcellularLocation>
        <location evidence="3 7">Nucleus envelope</location>
    </subcellularLocation>
    <subcellularLocation>
        <location evidence="5">Nucleus membrane</location>
    </subcellularLocation>
    <subcellularLocation>
        <location evidence="3">Cytoplasm</location>
        <location evidence="3">Cytoskeleton</location>
        <location evidence="3">Spindle</location>
    </subcellularLocation>
    <subcellularLocation>
        <location evidence="3 9">Chromosome</location>
    </subcellularLocation>
    <subcellularLocation>
        <location evidence="7 9">Nucleus matrix</location>
    </subcellularLocation>
    <text evidence="1 3 7 9">Located on both the cytoplasmic and nuclear sides of the NPC core structure (By similarity). During syncytial embryo and larval neuroblast mitosis localizes to the nuclear envelope in interphase, accumulates in the nucleus in prometaphase, localizes to the spindle envelope in metaphase and then to condensing chromatin in telophase (PubMed:18562695). In spermatocytes, detected in the nuclear matrix by the nuclear envelope in metaphase I, and in the spindle envelope in premeiotic nuclei and during anaphase I (PubMed:27402967). Colocalizes with type-B lamin Lam throughout meiosis I (PubMed:27402967). Unlike in mammals, does not localize to kinetochore (PubMed:18562695, PubMed:27402967). Can localize to the nuclear lumen proximal to the inner nuclear membrane (PubMed:31784359).</text>
</comment>
<comment type="tissue specificity">
    <text evidence="7">Expressed in spermatocytes (at protein level).</text>
</comment>
<comment type="developmental stage">
    <text evidence="3 8">Expressed in embryos, larvae and adults (at protein level) (PubMed:18562695, PubMed:31626769). Expressed in embryonal and larval neuroblasts (at protein level) (PubMed:18562695). Expressed during oogenesis (at protein level) (PubMed:31626769).</text>
</comment>
<comment type="disruption phenotype">
    <text evidence="3 5 7">Embryonic lethal (PubMed:18562695, PubMed:26485283). RNAi-mediated knockdown in somatic gonadal cells results in female, but not male, infertility associated with extensive disintegration of the egg chambers and cell death in nurse cells (PubMed:26485283). RNAi-mediated knockdown in spermatocytes causes abnormal localization of nuclear type-B lamin Lam, abnormal spindle envelope integrity and overall defective cytokinesis in meiosis (PubMed:27402967).</text>
</comment>
<comment type="similarity">
    <text evidence="10">Belongs to the nucleoporin Nup84/Nup107 family.</text>
</comment>
<name>NU107_DROME</name>
<gene>
    <name evidence="12" type="primary">Nup107</name>
    <name evidence="12" type="ORF">CG6743</name>
</gene>
<evidence type="ECO:0000250" key="1">
    <source>
        <dbReference type="UniProtKB" id="P57740"/>
    </source>
</evidence>
<evidence type="ECO:0000256" key="2">
    <source>
        <dbReference type="SAM" id="MobiDB-lite"/>
    </source>
</evidence>
<evidence type="ECO:0000269" key="3">
    <source>
    </source>
</evidence>
<evidence type="ECO:0000269" key="4">
    <source>
    </source>
</evidence>
<evidence type="ECO:0000269" key="5">
    <source>
    </source>
</evidence>
<evidence type="ECO:0000269" key="6">
    <source>
    </source>
</evidence>
<evidence type="ECO:0000269" key="7">
    <source>
    </source>
</evidence>
<evidence type="ECO:0000269" key="8">
    <source>
    </source>
</evidence>
<evidence type="ECO:0000269" key="9">
    <source>
    </source>
</evidence>
<evidence type="ECO:0000305" key="10"/>
<evidence type="ECO:0000312" key="11">
    <source>
        <dbReference type="EMBL" id="AAD46878.1"/>
    </source>
</evidence>
<evidence type="ECO:0000312" key="12">
    <source>
        <dbReference type="FlyBase" id="FBgn0027868"/>
    </source>
</evidence>
<evidence type="ECO:0000312" key="13">
    <source>
        <dbReference type="Proteomes" id="UP000000803"/>
    </source>
</evidence>
<organism evidence="13">
    <name type="scientific">Drosophila melanogaster</name>
    <name type="common">Fruit fly</name>
    <dbReference type="NCBI Taxonomy" id="7227"/>
    <lineage>
        <taxon>Eukaryota</taxon>
        <taxon>Metazoa</taxon>
        <taxon>Ecdysozoa</taxon>
        <taxon>Arthropoda</taxon>
        <taxon>Hexapoda</taxon>
        <taxon>Insecta</taxon>
        <taxon>Pterygota</taxon>
        <taxon>Neoptera</taxon>
        <taxon>Endopterygota</taxon>
        <taxon>Diptera</taxon>
        <taxon>Brachycera</taxon>
        <taxon>Muscomorpha</taxon>
        <taxon>Ephydroidea</taxon>
        <taxon>Drosophilidae</taxon>
        <taxon>Drosophila</taxon>
        <taxon>Sophophora</taxon>
    </lineage>
</organism>
<proteinExistence type="evidence at protein level"/>
<dbReference type="EMBL" id="AE014134">
    <property type="protein sequence ID" value="AAF53002.1"/>
    <property type="molecule type" value="Genomic_DNA"/>
</dbReference>
<dbReference type="EMBL" id="AF160938">
    <property type="protein sequence ID" value="AAD46878.1"/>
    <property type="molecule type" value="mRNA"/>
</dbReference>
<dbReference type="RefSeq" id="NP_609446.1">
    <property type="nucleotide sequence ID" value="NM_135602.4"/>
</dbReference>
<dbReference type="SMR" id="Q9V466"/>
<dbReference type="ComplexPortal" id="CPX-2568">
    <property type="entry name" value="Nuclear pore complex"/>
</dbReference>
<dbReference type="FunCoup" id="Q9V466">
    <property type="interactions" value="1927"/>
</dbReference>
<dbReference type="IntAct" id="Q9V466">
    <property type="interactions" value="5"/>
</dbReference>
<dbReference type="STRING" id="7227.FBpp0079710"/>
<dbReference type="PaxDb" id="7227-FBpp0079710"/>
<dbReference type="DNASU" id="34481"/>
<dbReference type="EnsemblMetazoa" id="FBtr0080121">
    <property type="protein sequence ID" value="FBpp0079710"/>
    <property type="gene ID" value="FBgn0027868"/>
</dbReference>
<dbReference type="GeneID" id="34481"/>
<dbReference type="KEGG" id="dme:Dmel_CG6743"/>
<dbReference type="UCSC" id="CG6743-RA">
    <property type="organism name" value="d. melanogaster"/>
</dbReference>
<dbReference type="AGR" id="FB:FBgn0027868"/>
<dbReference type="CTD" id="57122"/>
<dbReference type="FlyBase" id="FBgn0027868">
    <property type="gene designation" value="Nup107"/>
</dbReference>
<dbReference type="VEuPathDB" id="VectorBase:FBgn0027868"/>
<dbReference type="eggNOG" id="KOG1964">
    <property type="taxonomic scope" value="Eukaryota"/>
</dbReference>
<dbReference type="GeneTree" id="ENSGT00390000012080"/>
<dbReference type="HOGENOM" id="CLU_012944_1_0_1"/>
<dbReference type="InParanoid" id="Q9V466"/>
<dbReference type="OMA" id="MAHIVLF"/>
<dbReference type="OrthoDB" id="3098at2759"/>
<dbReference type="PhylomeDB" id="Q9V466"/>
<dbReference type="Reactome" id="R-DME-159227">
    <property type="pathway name" value="Transport of the SLBP independent Mature mRNA"/>
</dbReference>
<dbReference type="Reactome" id="R-DME-159230">
    <property type="pathway name" value="Transport of the SLBP Dependant Mature mRNA"/>
</dbReference>
<dbReference type="Reactome" id="R-DME-159231">
    <property type="pathway name" value="Transport of Mature mRNA Derived from an Intronless Transcript"/>
</dbReference>
<dbReference type="Reactome" id="R-DME-159236">
    <property type="pathway name" value="Transport of Mature mRNA derived from an Intron-Containing Transcript"/>
</dbReference>
<dbReference type="Reactome" id="R-DME-3108214">
    <property type="pathway name" value="SUMOylation of DNA damage response and repair proteins"/>
</dbReference>
<dbReference type="Reactome" id="R-DME-3301854">
    <property type="pathway name" value="Nuclear Pore Complex (NPC) Disassembly"/>
</dbReference>
<dbReference type="Reactome" id="R-DME-4085377">
    <property type="pathway name" value="SUMOylation of SUMOylation proteins"/>
</dbReference>
<dbReference type="Reactome" id="R-DME-4551638">
    <property type="pathway name" value="SUMOylation of chromatin organization proteins"/>
</dbReference>
<dbReference type="Reactome" id="R-DME-4615885">
    <property type="pathway name" value="SUMOylation of DNA replication proteins"/>
</dbReference>
<dbReference type="Reactome" id="R-DME-5578749">
    <property type="pathway name" value="Transcriptional regulation by small RNAs"/>
</dbReference>
<dbReference type="Reactome" id="R-DME-9615933">
    <property type="pathway name" value="Postmitotic nuclear pore complex (NPC) reformation"/>
</dbReference>
<dbReference type="SignaLink" id="Q9V466"/>
<dbReference type="BioGRID-ORCS" id="34481">
    <property type="hits" value="0 hits in 1 CRISPR screen"/>
</dbReference>
<dbReference type="GenomeRNAi" id="34481"/>
<dbReference type="PRO" id="PR:Q9V466"/>
<dbReference type="Proteomes" id="UP000000803">
    <property type="component" value="Chromosome 2L"/>
</dbReference>
<dbReference type="Bgee" id="FBgn0027868">
    <property type="expression patterns" value="Expressed in secondary oocyte and 64 other cell types or tissues"/>
</dbReference>
<dbReference type="ExpressionAtlas" id="Q9V466">
    <property type="expression patterns" value="baseline and differential"/>
</dbReference>
<dbReference type="GO" id="GO:0005694">
    <property type="term" value="C:chromosome"/>
    <property type="evidence" value="ECO:0007669"/>
    <property type="project" value="UniProtKB-SubCell"/>
</dbReference>
<dbReference type="GO" id="GO:0005737">
    <property type="term" value="C:cytoplasm"/>
    <property type="evidence" value="ECO:0007669"/>
    <property type="project" value="UniProtKB-KW"/>
</dbReference>
<dbReference type="GO" id="GO:0005635">
    <property type="term" value="C:nuclear envelope"/>
    <property type="evidence" value="ECO:0000314"/>
    <property type="project" value="FlyBase"/>
</dbReference>
<dbReference type="GO" id="GO:0016363">
    <property type="term" value="C:nuclear matrix"/>
    <property type="evidence" value="ECO:0007669"/>
    <property type="project" value="UniProtKB-SubCell"/>
</dbReference>
<dbReference type="GO" id="GO:0031965">
    <property type="term" value="C:nuclear membrane"/>
    <property type="evidence" value="ECO:0007669"/>
    <property type="project" value="UniProtKB-SubCell"/>
</dbReference>
<dbReference type="GO" id="GO:0034399">
    <property type="term" value="C:nuclear periphery"/>
    <property type="evidence" value="ECO:0000314"/>
    <property type="project" value="UniProtKB"/>
</dbReference>
<dbReference type="GO" id="GO:0005643">
    <property type="term" value="C:nuclear pore"/>
    <property type="evidence" value="ECO:0000314"/>
    <property type="project" value="UniProtKB"/>
</dbReference>
<dbReference type="GO" id="GO:0031080">
    <property type="term" value="C:nuclear pore outer ring"/>
    <property type="evidence" value="ECO:0000250"/>
    <property type="project" value="FlyBase"/>
</dbReference>
<dbReference type="GO" id="GO:0005819">
    <property type="term" value="C:spindle"/>
    <property type="evidence" value="ECO:0007669"/>
    <property type="project" value="UniProtKB-SubCell"/>
</dbReference>
<dbReference type="GO" id="GO:0003682">
    <property type="term" value="F:chromatin binding"/>
    <property type="evidence" value="ECO:0000314"/>
    <property type="project" value="UniProtKB"/>
</dbReference>
<dbReference type="GO" id="GO:0017056">
    <property type="term" value="F:structural constituent of nuclear pore"/>
    <property type="evidence" value="ECO:0000250"/>
    <property type="project" value="FlyBase"/>
</dbReference>
<dbReference type="GO" id="GO:0000724">
    <property type="term" value="P:double-strand break repair via homologous recombination"/>
    <property type="evidence" value="ECO:0000315"/>
    <property type="project" value="FlyBase"/>
</dbReference>
<dbReference type="GO" id="GO:0030703">
    <property type="term" value="P:eggshell formation"/>
    <property type="evidence" value="ECO:0000315"/>
    <property type="project" value="UniProtKB"/>
</dbReference>
<dbReference type="GO" id="GO:0008585">
    <property type="term" value="P:female gonad development"/>
    <property type="evidence" value="ECO:0000315"/>
    <property type="project" value="UniProtKB"/>
</dbReference>
<dbReference type="GO" id="GO:0007112">
    <property type="term" value="P:male meiosis cytokinesis"/>
    <property type="evidence" value="ECO:0000315"/>
    <property type="project" value="UniProtKB"/>
</dbReference>
<dbReference type="GO" id="GO:0007110">
    <property type="term" value="P:meiosis I cytokinesis"/>
    <property type="evidence" value="ECO:0000315"/>
    <property type="project" value="UniProtKB"/>
</dbReference>
<dbReference type="GO" id="GO:0006406">
    <property type="term" value="P:mRNA export from nucleus"/>
    <property type="evidence" value="ECO:0000250"/>
    <property type="project" value="FlyBase"/>
</dbReference>
<dbReference type="GO" id="GO:1900182">
    <property type="term" value="P:positive regulation of protein localization to nucleus"/>
    <property type="evidence" value="ECO:0000315"/>
    <property type="project" value="UniProtKB"/>
</dbReference>
<dbReference type="GO" id="GO:0000973">
    <property type="term" value="P:post-transcriptional tethering of RNA polymerase II gene DNA at nuclear periphery"/>
    <property type="evidence" value="ECO:0000318"/>
    <property type="project" value="GO_Central"/>
</dbReference>
<dbReference type="GO" id="GO:0006606">
    <property type="term" value="P:protein import into nucleus"/>
    <property type="evidence" value="ECO:0000315"/>
    <property type="project" value="FlyBase"/>
</dbReference>
<dbReference type="GO" id="GO:0046822">
    <property type="term" value="P:regulation of nucleocytoplasmic transport"/>
    <property type="evidence" value="ECO:0000315"/>
    <property type="project" value="FlyBase"/>
</dbReference>
<dbReference type="GO" id="GO:0048137">
    <property type="term" value="P:spermatocyte division"/>
    <property type="evidence" value="ECO:0000315"/>
    <property type="project" value="UniProtKB"/>
</dbReference>
<dbReference type="FunFam" id="1.10.3450.20:FF:000001">
    <property type="entry name" value="Nuclear pore complex protein"/>
    <property type="match status" value="1"/>
</dbReference>
<dbReference type="FunFam" id="1.20.190.50:FF:000002">
    <property type="entry name" value="Nuclear pore complex protein"/>
    <property type="match status" value="1"/>
</dbReference>
<dbReference type="Gene3D" id="1.10.3450.20">
    <property type="match status" value="1"/>
</dbReference>
<dbReference type="Gene3D" id="1.20.190.50">
    <property type="match status" value="1"/>
</dbReference>
<dbReference type="InterPro" id="IPR007252">
    <property type="entry name" value="Nup84/Nup107"/>
</dbReference>
<dbReference type="PANTHER" id="PTHR13003:SF2">
    <property type="entry name" value="NUCLEAR PORE COMPLEX PROTEIN NUP107"/>
    <property type="match status" value="1"/>
</dbReference>
<dbReference type="PANTHER" id="PTHR13003">
    <property type="entry name" value="NUP107-RELATED"/>
    <property type="match status" value="1"/>
</dbReference>
<dbReference type="Pfam" id="PF04121">
    <property type="entry name" value="Nup84_Nup100"/>
    <property type="match status" value="1"/>
</dbReference>
<protein>
    <recommendedName>
        <fullName evidence="10">Nuclear pore complex protein Nup107</fullName>
    </recommendedName>
    <alternativeName>
        <fullName evidence="10">Nucleoporin Nup107</fullName>
    </alternativeName>
</protein>
<sequence length="845" mass="97382">MADSPFPRSSRSGLLRTTLNSSMPPQNLSHSLLILEKSNAEQNELSLMEDTGDDLDRGKSRMDVLFPQFFDVLQAQGNGQEAFEVIQSLTQVCRGVVEQLELEIDHGMGGEQGARQRESMLTWLRQEINTWRLLHALFYDRILLQTDRQADDEMQDGPTLGGSEKEVIQQLYALNATLREYQLVVDWLEACYDRGEQQNPLHAHDRMMAWENTLFQLENLQGAAFGKGHKIVTRLDPDAPVREKRPLHALDEEDNLRLSRAIFELIRAGRVDDGLKLCKHFGQTWRAAILEGWRLHEDPNFEQNVSVLHEKLPIEGNPRRDIWKRCAWMLADSKNYDEYSRATAGVFSGHLGSLKTLLHSNWHDLLWAHLKVQIDIRVESEIRGCCLKNYQPMPDDYWNGRMTMEQIFEELNVAKDASVRDFAQSQLGIIQRHLILDTCGELIQHMVRWVEKDTSQQSPHQLRFMAHIVLFLRQIGRVEQERQAEKIVAAYVEALIARGEPQLIAYYTASLSNPLQVQLYSRFLEQVEQKRPRELAVDAALQAGLDVEQITRVTVQNIRLAHQPLGEFGEPQSGEISAIDQRKISALEWLIHLPEQRGELLWQANAMIRTYLASSKVECMRQTFRMVPADIVQQLVSLYGSVDNIPPREECCLKEYLCYKAYLSGVDSFVEWNRLQQNRPKKPQTSHAASSQDNFTERMASERKEQAHRSEVVRWEHKVKEQAKQTIELLYNVLMFPDKGWLVDPFIAKLPENAVQLSWDHRLLQMEKLRSICIPEIALFLNEVMFKSGDFAGCVRLADEISSENRQLYKVYTKHKLAELLAKIADASLELLNSKLDPWGYPITT</sequence>